<sequence>DIVEKDPVKTSFERWAQPGHFSKNLAKGPSTTTWIWNLHADAHDFDSHTNDLEDISRKIFGAHFGQLAIIFIWLSGMYFHGARFSNYEAWLNDPTHVKPSAQVVWPIVGQEILNGDVGGGFQGIQITSGFFQLWRASGITNELQLYCTAVGALIFAGLMFFAGWFHYHKAAPKLAWFQNVESMLNHHLAGLLGLGSLGWAGHQIHVSLPINQLLDAGVDSKEVPLPHEFILNREILTQAYPSFAKGLIPFFTLDWSEYSDFLTFRGGLNPVTGGLWLTDTAHHHLAIAVLFLVAGHMYRTNWGIGHSTREILEAHKGPFTGEGHKGLYEILTSSWHAQLAINLAMLGSLTIIVSHHMYAMPPYPYLATDYATQLSLFTHHMWIGGFLVVGAAAHAAIFMVRDYDPTTQYNNLLDRVIRHRDAIISHLNWVCIFLGFHSFGLYIHNDTMSALGRPQDMFSDTAIQLQPIFAQWVQNTHALAPGSTAPNAAAATSLTWGGSNLVAVGGKIAISPITLGTADFLVHHIHAFTIHVTVLILLKGVLFARSSRLIPDKANLGFRFPCDGPGRGGTCQVSAWDHVFLGLFWMYNSISVVIFHFSWKMQSDVWGSISEQGVINHITGGNFAQSSTTINGWLRDFLWAQASQVIQSYGSSLSAYGLLFLGAHFVWAFSLMFLFSGRGYWQELIESIVWAHNKLKVAPVTQPRALSIIQGRAVGVTHT</sequence>
<proteinExistence type="inferred from homology"/>
<gene>
    <name evidence="1" type="primary">psaA</name>
</gene>
<comment type="function">
    <text>PsaA and PsaB bind P700, the primary electron donor of photosystem I (PSI), as well as the electron acceptors A0, A1 and FX. PSI is a plastocyanin-ferredoxin oxidoreductase, converting photonic excitation into a charge separation, which transfers an electron from the donor P700 chlorophyll pair to the spectroscopically characterized acceptors A0, A1, FX, FA and FB in turn. Oxidized P700 is reduced on the lumenal side of the thylakoid membrane by plastocyanin.</text>
</comment>
<comment type="catalytic activity">
    <reaction evidence="1">
        <text>reduced [plastocyanin] + hnu + oxidized [2Fe-2S]-[ferredoxin] = oxidized [plastocyanin] + reduced [2Fe-2S]-[ferredoxin]</text>
        <dbReference type="Rhea" id="RHEA:30407"/>
        <dbReference type="Rhea" id="RHEA-COMP:10000"/>
        <dbReference type="Rhea" id="RHEA-COMP:10001"/>
        <dbReference type="Rhea" id="RHEA-COMP:10039"/>
        <dbReference type="Rhea" id="RHEA-COMP:10040"/>
        <dbReference type="ChEBI" id="CHEBI:29036"/>
        <dbReference type="ChEBI" id="CHEBI:30212"/>
        <dbReference type="ChEBI" id="CHEBI:33737"/>
        <dbReference type="ChEBI" id="CHEBI:33738"/>
        <dbReference type="ChEBI" id="CHEBI:49552"/>
        <dbReference type="EC" id="1.97.1.12"/>
    </reaction>
</comment>
<comment type="cofactor">
    <text evidence="1">P700 is a chlorophyll a/chlorophyll a' dimer, A0 is one or more chlorophyll a, A1 is one or both phylloquinones and FX is a shared 4Fe-4S iron-sulfur center.</text>
</comment>
<comment type="subunit">
    <text evidence="1">The PsaA/B heterodimer binds the P700 chlorophyll special pair and subsequent electron acceptors. PSI consists of a core antenna complex that captures photons, and an electron transfer chain that converts photonic excitation into a charge separation. The eukaryotic PSI reaction center is composed of at least 11 subunits.</text>
</comment>
<comment type="subcellular location">
    <subcellularLocation>
        <location evidence="1">Plastid</location>
        <location evidence="1">Chloroplast thylakoid membrane</location>
        <topology evidence="1">Multi-pass membrane protein</topology>
    </subcellularLocation>
</comment>
<comment type="similarity">
    <text evidence="1">Belongs to the PsaA/PsaB family.</text>
</comment>
<reference key="1">
    <citation type="journal article" date="2000" name="Mol. Biol. Evol.">
        <title>Error, bias, and long-branch attraction in data for two chloroplast photosystem genes in seed plants.</title>
        <authorList>
            <person name="Sanderson M.J."/>
            <person name="Wojciechowski M.F."/>
            <person name="Hu J.-M."/>
            <person name="Sher Khan T."/>
            <person name="Brady S.G."/>
        </authorList>
    </citation>
    <scope>NUCLEOTIDE SEQUENCE [GENOMIC DNA]</scope>
</reference>
<protein>
    <recommendedName>
        <fullName evidence="1">Photosystem I P700 chlorophyll a apoprotein A1</fullName>
        <ecNumber evidence="1">1.97.1.12</ecNumber>
    </recommendedName>
    <alternativeName>
        <fullName evidence="1">PSI-A</fullName>
    </alternativeName>
    <alternativeName>
        <fullName evidence="1">PsaA</fullName>
    </alternativeName>
</protein>
<accession>Q9MUJ4</accession>
<geneLocation type="chloroplast"/>
<feature type="chain" id="PRO_0000088535" description="Photosystem I P700 chlorophyll a apoprotein A1">
    <location>
        <begin position="1" status="less than"/>
        <end position="719" status="greater than"/>
    </location>
</feature>
<feature type="transmembrane region" description="Helical; Name=I" evidence="1">
    <location>
        <begin position="59"/>
        <end position="82"/>
    </location>
</feature>
<feature type="transmembrane region" description="Helical; Name=II" evidence="1">
    <location>
        <begin position="145"/>
        <end position="168"/>
    </location>
</feature>
<feature type="transmembrane region" description="Helical; Name=III" evidence="1">
    <location>
        <begin position="184"/>
        <end position="208"/>
    </location>
</feature>
<feature type="transmembrane region" description="Helical; Name=IV" evidence="1">
    <location>
        <begin position="280"/>
        <end position="298"/>
    </location>
</feature>
<feature type="transmembrane region" description="Helical; Name=V" evidence="1">
    <location>
        <begin position="335"/>
        <end position="358"/>
    </location>
</feature>
<feature type="transmembrane region" description="Helical; Name=VI" evidence="1">
    <location>
        <begin position="374"/>
        <end position="400"/>
    </location>
</feature>
<feature type="transmembrane region" description="Helical; Name=VII" evidence="1">
    <location>
        <begin position="422"/>
        <end position="444"/>
    </location>
</feature>
<feature type="transmembrane region" description="Helical; Name=VIII" evidence="1">
    <location>
        <begin position="520"/>
        <end position="538"/>
    </location>
</feature>
<feature type="transmembrane region" description="Helical; Name=IX" evidence="1">
    <location>
        <begin position="578"/>
        <end position="599"/>
    </location>
</feature>
<feature type="transmembrane region" description="Helical; Name=X" evidence="1">
    <location>
        <begin position="653"/>
        <end position="675"/>
    </location>
</feature>
<feature type="transmembrane region" description="Helical; Name=XI" evidence="1">
    <location>
        <begin position="713"/>
        <end position="719" status="greater than"/>
    </location>
</feature>
<feature type="binding site" evidence="1">
    <location>
        <position position="562"/>
    </location>
    <ligand>
        <name>[4Fe-4S] cluster</name>
        <dbReference type="ChEBI" id="CHEBI:49883"/>
        <note>ligand shared between dimeric partners</note>
    </ligand>
</feature>
<feature type="binding site" evidence="1">
    <location>
        <position position="571"/>
    </location>
    <ligand>
        <name>[4Fe-4S] cluster</name>
        <dbReference type="ChEBI" id="CHEBI:49883"/>
        <note>ligand shared between dimeric partners</note>
    </ligand>
</feature>
<feature type="binding site" description="axial binding residue" evidence="1">
    <location>
        <position position="664"/>
    </location>
    <ligand>
        <name>chlorophyll a'</name>
        <dbReference type="ChEBI" id="CHEBI:189419"/>
        <label>A1</label>
    </ligand>
    <ligandPart>
        <name>Mg</name>
        <dbReference type="ChEBI" id="CHEBI:25107"/>
    </ligandPart>
</feature>
<feature type="binding site" description="axial binding residue" evidence="1">
    <location>
        <position position="672"/>
    </location>
    <ligand>
        <name>chlorophyll a</name>
        <dbReference type="ChEBI" id="CHEBI:58416"/>
        <label>A3</label>
    </ligand>
    <ligandPart>
        <name>Mg</name>
        <dbReference type="ChEBI" id="CHEBI:25107"/>
    </ligandPart>
</feature>
<feature type="binding site" evidence="1">
    <location>
        <position position="680"/>
    </location>
    <ligand>
        <name>chlorophyll a</name>
        <dbReference type="ChEBI" id="CHEBI:58416"/>
        <label>A3</label>
    </ligand>
</feature>
<feature type="binding site" evidence="1">
    <location>
        <position position="681"/>
    </location>
    <ligand>
        <name>phylloquinone</name>
        <dbReference type="ChEBI" id="CHEBI:18067"/>
        <label>A</label>
    </ligand>
</feature>
<feature type="non-terminal residue">
    <location>
        <position position="1"/>
    </location>
</feature>
<feature type="non-terminal residue">
    <location>
        <position position="719"/>
    </location>
</feature>
<organism>
    <name type="scientific">Asplenium nidus</name>
    <name type="common">Bird's nest fern</name>
    <dbReference type="NCBI Taxonomy" id="29642"/>
    <lineage>
        <taxon>Eukaryota</taxon>
        <taxon>Viridiplantae</taxon>
        <taxon>Streptophyta</taxon>
        <taxon>Embryophyta</taxon>
        <taxon>Tracheophyta</taxon>
        <taxon>Polypodiopsida</taxon>
        <taxon>Polypodiidae</taxon>
        <taxon>Polypodiales</taxon>
        <taxon>Aspleniineae</taxon>
        <taxon>Aspleniaceae</taxon>
        <taxon>Asplenium</taxon>
    </lineage>
</organism>
<name>PSAA_ASPND</name>
<keyword id="KW-0004">4Fe-4S</keyword>
<keyword id="KW-0148">Chlorophyll</keyword>
<keyword id="KW-0150">Chloroplast</keyword>
<keyword id="KW-0157">Chromophore</keyword>
<keyword id="KW-0249">Electron transport</keyword>
<keyword id="KW-0408">Iron</keyword>
<keyword id="KW-0411">Iron-sulfur</keyword>
<keyword id="KW-0460">Magnesium</keyword>
<keyword id="KW-0472">Membrane</keyword>
<keyword id="KW-0479">Metal-binding</keyword>
<keyword id="KW-0560">Oxidoreductase</keyword>
<keyword id="KW-0602">Photosynthesis</keyword>
<keyword id="KW-0603">Photosystem I</keyword>
<keyword id="KW-0934">Plastid</keyword>
<keyword id="KW-0793">Thylakoid</keyword>
<keyword id="KW-0812">Transmembrane</keyword>
<keyword id="KW-1133">Transmembrane helix</keyword>
<keyword id="KW-0813">Transport</keyword>
<dbReference type="EC" id="1.97.1.12" evidence="1"/>
<dbReference type="EMBL" id="AF180021">
    <property type="protein sequence ID" value="AAF29822.1"/>
    <property type="molecule type" value="Genomic_DNA"/>
</dbReference>
<dbReference type="SMR" id="Q9MUJ4"/>
<dbReference type="GO" id="GO:0009535">
    <property type="term" value="C:chloroplast thylakoid membrane"/>
    <property type="evidence" value="ECO:0007669"/>
    <property type="project" value="UniProtKB-SubCell"/>
</dbReference>
<dbReference type="GO" id="GO:0009522">
    <property type="term" value="C:photosystem I"/>
    <property type="evidence" value="ECO:0007669"/>
    <property type="project" value="UniProtKB-KW"/>
</dbReference>
<dbReference type="GO" id="GO:0051539">
    <property type="term" value="F:4 iron, 4 sulfur cluster binding"/>
    <property type="evidence" value="ECO:0007669"/>
    <property type="project" value="UniProtKB-KW"/>
</dbReference>
<dbReference type="GO" id="GO:0016168">
    <property type="term" value="F:chlorophyll binding"/>
    <property type="evidence" value="ECO:0007669"/>
    <property type="project" value="UniProtKB-KW"/>
</dbReference>
<dbReference type="GO" id="GO:0046872">
    <property type="term" value="F:metal ion binding"/>
    <property type="evidence" value="ECO:0007669"/>
    <property type="project" value="UniProtKB-KW"/>
</dbReference>
<dbReference type="GO" id="GO:0016491">
    <property type="term" value="F:oxidoreductase activity"/>
    <property type="evidence" value="ECO:0007669"/>
    <property type="project" value="UniProtKB-KW"/>
</dbReference>
<dbReference type="GO" id="GO:0015979">
    <property type="term" value="P:photosynthesis"/>
    <property type="evidence" value="ECO:0007669"/>
    <property type="project" value="UniProtKB-KW"/>
</dbReference>
<dbReference type="FunFam" id="1.20.1130.10:FF:000001">
    <property type="entry name" value="Photosystem I P700 chlorophyll a apoprotein A2"/>
    <property type="match status" value="1"/>
</dbReference>
<dbReference type="Gene3D" id="1.20.1130.10">
    <property type="entry name" value="Photosystem I PsaA/PsaB"/>
    <property type="match status" value="1"/>
</dbReference>
<dbReference type="HAMAP" id="MF_00458">
    <property type="entry name" value="PSI_PsaA"/>
    <property type="match status" value="1"/>
</dbReference>
<dbReference type="InterPro" id="IPR006243">
    <property type="entry name" value="PSI_PsaA"/>
</dbReference>
<dbReference type="InterPro" id="IPR001280">
    <property type="entry name" value="PSI_PsaA/B"/>
</dbReference>
<dbReference type="InterPro" id="IPR020586">
    <property type="entry name" value="PSI_PsaA/B_CS"/>
</dbReference>
<dbReference type="InterPro" id="IPR036408">
    <property type="entry name" value="PSI_PsaA/B_sf"/>
</dbReference>
<dbReference type="NCBIfam" id="TIGR01335">
    <property type="entry name" value="psaA"/>
    <property type="match status" value="1"/>
</dbReference>
<dbReference type="PANTHER" id="PTHR30128">
    <property type="entry name" value="OUTER MEMBRANE PROTEIN, OMPA-RELATED"/>
    <property type="match status" value="1"/>
</dbReference>
<dbReference type="PANTHER" id="PTHR30128:SF19">
    <property type="entry name" value="PHOTOSYSTEM I P700 CHLOROPHYLL A APOPROTEIN A1-RELATED"/>
    <property type="match status" value="1"/>
</dbReference>
<dbReference type="Pfam" id="PF00223">
    <property type="entry name" value="PsaA_PsaB"/>
    <property type="match status" value="1"/>
</dbReference>
<dbReference type="PIRSF" id="PIRSF002905">
    <property type="entry name" value="PSI_A"/>
    <property type="match status" value="1"/>
</dbReference>
<dbReference type="PRINTS" id="PR00257">
    <property type="entry name" value="PHOTSYSPSAAB"/>
</dbReference>
<dbReference type="SUPFAM" id="SSF81558">
    <property type="entry name" value="Photosystem I subunits PsaA/PsaB"/>
    <property type="match status" value="1"/>
</dbReference>
<dbReference type="PROSITE" id="PS00419">
    <property type="entry name" value="PHOTOSYSTEM_I_PSAAB"/>
    <property type="match status" value="1"/>
</dbReference>
<evidence type="ECO:0000255" key="1">
    <source>
        <dbReference type="HAMAP-Rule" id="MF_00458"/>
    </source>
</evidence>